<feature type="chain" id="PRO_1000000454" description="Argininosuccinate lyase">
    <location>
        <begin position="1"/>
        <end position="463"/>
    </location>
</feature>
<reference key="1">
    <citation type="journal article" date="2007" name="Science">
        <title>Legumes symbioses: absence of nod genes in photosynthetic bradyrhizobia.</title>
        <authorList>
            <person name="Giraud E."/>
            <person name="Moulin L."/>
            <person name="Vallenet D."/>
            <person name="Barbe V."/>
            <person name="Cytryn E."/>
            <person name="Avarre J.-C."/>
            <person name="Jaubert M."/>
            <person name="Simon D."/>
            <person name="Cartieaux F."/>
            <person name="Prin Y."/>
            <person name="Bena G."/>
            <person name="Hannibal L."/>
            <person name="Fardoux J."/>
            <person name="Kojadinovic M."/>
            <person name="Vuillet L."/>
            <person name="Lajus A."/>
            <person name="Cruveiller S."/>
            <person name="Rouy Z."/>
            <person name="Mangenot S."/>
            <person name="Segurens B."/>
            <person name="Dossat C."/>
            <person name="Franck W.L."/>
            <person name="Chang W.-S."/>
            <person name="Saunders E."/>
            <person name="Bruce D."/>
            <person name="Richardson P."/>
            <person name="Normand P."/>
            <person name="Dreyfus B."/>
            <person name="Pignol D."/>
            <person name="Stacey G."/>
            <person name="Emerich D."/>
            <person name="Vermeglio A."/>
            <person name="Medigue C."/>
            <person name="Sadowsky M."/>
        </authorList>
    </citation>
    <scope>NUCLEOTIDE SEQUENCE [LARGE SCALE GENOMIC DNA]</scope>
    <source>
        <strain>ORS 278</strain>
    </source>
</reference>
<proteinExistence type="inferred from homology"/>
<dbReference type="EC" id="4.3.2.1" evidence="1"/>
<dbReference type="EMBL" id="CU234118">
    <property type="protein sequence ID" value="CAL80100.1"/>
    <property type="molecule type" value="Genomic_DNA"/>
</dbReference>
<dbReference type="RefSeq" id="WP_012029979.1">
    <property type="nucleotide sequence ID" value="NC_009445.1"/>
</dbReference>
<dbReference type="SMR" id="A4Z1S4"/>
<dbReference type="STRING" id="114615.BRADO6487"/>
<dbReference type="KEGG" id="bra:BRADO6487"/>
<dbReference type="eggNOG" id="COG0165">
    <property type="taxonomic scope" value="Bacteria"/>
</dbReference>
<dbReference type="HOGENOM" id="CLU_027272_2_3_5"/>
<dbReference type="OrthoDB" id="9769623at2"/>
<dbReference type="UniPathway" id="UPA00068">
    <property type="reaction ID" value="UER00114"/>
</dbReference>
<dbReference type="Proteomes" id="UP000001994">
    <property type="component" value="Chromosome"/>
</dbReference>
<dbReference type="GO" id="GO:0005829">
    <property type="term" value="C:cytosol"/>
    <property type="evidence" value="ECO:0007669"/>
    <property type="project" value="TreeGrafter"/>
</dbReference>
<dbReference type="GO" id="GO:0004056">
    <property type="term" value="F:argininosuccinate lyase activity"/>
    <property type="evidence" value="ECO:0007669"/>
    <property type="project" value="UniProtKB-UniRule"/>
</dbReference>
<dbReference type="GO" id="GO:0042450">
    <property type="term" value="P:arginine biosynthetic process via ornithine"/>
    <property type="evidence" value="ECO:0007669"/>
    <property type="project" value="InterPro"/>
</dbReference>
<dbReference type="GO" id="GO:0006526">
    <property type="term" value="P:L-arginine biosynthetic process"/>
    <property type="evidence" value="ECO:0007669"/>
    <property type="project" value="UniProtKB-UniRule"/>
</dbReference>
<dbReference type="CDD" id="cd01359">
    <property type="entry name" value="Argininosuccinate_lyase"/>
    <property type="match status" value="1"/>
</dbReference>
<dbReference type="FunFam" id="1.10.275.10:FF:000002">
    <property type="entry name" value="Argininosuccinate lyase"/>
    <property type="match status" value="1"/>
</dbReference>
<dbReference type="FunFam" id="1.10.40.30:FF:000001">
    <property type="entry name" value="Argininosuccinate lyase"/>
    <property type="match status" value="1"/>
</dbReference>
<dbReference type="FunFam" id="1.20.200.10:FF:000015">
    <property type="entry name" value="argininosuccinate lyase isoform X2"/>
    <property type="match status" value="1"/>
</dbReference>
<dbReference type="Gene3D" id="1.10.40.30">
    <property type="entry name" value="Fumarase/aspartase (C-terminal domain)"/>
    <property type="match status" value="1"/>
</dbReference>
<dbReference type="Gene3D" id="1.20.200.10">
    <property type="entry name" value="Fumarase/aspartase (Central domain)"/>
    <property type="match status" value="1"/>
</dbReference>
<dbReference type="Gene3D" id="1.10.275.10">
    <property type="entry name" value="Fumarase/aspartase (N-terminal domain)"/>
    <property type="match status" value="1"/>
</dbReference>
<dbReference type="HAMAP" id="MF_00006">
    <property type="entry name" value="Arg_succ_lyase"/>
    <property type="match status" value="1"/>
</dbReference>
<dbReference type="InterPro" id="IPR029419">
    <property type="entry name" value="Arg_succ_lyase_C"/>
</dbReference>
<dbReference type="InterPro" id="IPR009049">
    <property type="entry name" value="Argininosuccinate_lyase"/>
</dbReference>
<dbReference type="InterPro" id="IPR024083">
    <property type="entry name" value="Fumarase/histidase_N"/>
</dbReference>
<dbReference type="InterPro" id="IPR020557">
    <property type="entry name" value="Fumarate_lyase_CS"/>
</dbReference>
<dbReference type="InterPro" id="IPR000362">
    <property type="entry name" value="Fumarate_lyase_fam"/>
</dbReference>
<dbReference type="InterPro" id="IPR022761">
    <property type="entry name" value="Fumarate_lyase_N"/>
</dbReference>
<dbReference type="InterPro" id="IPR008948">
    <property type="entry name" value="L-Aspartase-like"/>
</dbReference>
<dbReference type="NCBIfam" id="TIGR00838">
    <property type="entry name" value="argH"/>
    <property type="match status" value="1"/>
</dbReference>
<dbReference type="PANTHER" id="PTHR43814">
    <property type="entry name" value="ARGININOSUCCINATE LYASE"/>
    <property type="match status" value="1"/>
</dbReference>
<dbReference type="PANTHER" id="PTHR43814:SF1">
    <property type="entry name" value="ARGININOSUCCINATE LYASE"/>
    <property type="match status" value="1"/>
</dbReference>
<dbReference type="Pfam" id="PF14698">
    <property type="entry name" value="ASL_C2"/>
    <property type="match status" value="1"/>
</dbReference>
<dbReference type="Pfam" id="PF00206">
    <property type="entry name" value="Lyase_1"/>
    <property type="match status" value="1"/>
</dbReference>
<dbReference type="PRINTS" id="PR00145">
    <property type="entry name" value="ARGSUCLYASE"/>
</dbReference>
<dbReference type="PRINTS" id="PR00149">
    <property type="entry name" value="FUMRATELYASE"/>
</dbReference>
<dbReference type="SUPFAM" id="SSF48557">
    <property type="entry name" value="L-aspartase-like"/>
    <property type="match status" value="1"/>
</dbReference>
<dbReference type="PROSITE" id="PS00163">
    <property type="entry name" value="FUMARATE_LYASES"/>
    <property type="match status" value="1"/>
</dbReference>
<keyword id="KW-0028">Amino-acid biosynthesis</keyword>
<keyword id="KW-0055">Arginine biosynthesis</keyword>
<keyword id="KW-0963">Cytoplasm</keyword>
<keyword id="KW-0456">Lyase</keyword>
<keyword id="KW-1185">Reference proteome</keyword>
<comment type="catalytic activity">
    <reaction evidence="1">
        <text>2-(N(omega)-L-arginino)succinate = fumarate + L-arginine</text>
        <dbReference type="Rhea" id="RHEA:24020"/>
        <dbReference type="ChEBI" id="CHEBI:29806"/>
        <dbReference type="ChEBI" id="CHEBI:32682"/>
        <dbReference type="ChEBI" id="CHEBI:57472"/>
        <dbReference type="EC" id="4.3.2.1"/>
    </reaction>
</comment>
<comment type="pathway">
    <text evidence="1">Amino-acid biosynthesis; L-arginine biosynthesis; L-arginine from L-ornithine and carbamoyl phosphate: step 3/3.</text>
</comment>
<comment type="subcellular location">
    <subcellularLocation>
        <location evidence="1">Cytoplasm</location>
    </subcellularLocation>
</comment>
<comment type="similarity">
    <text evidence="1">Belongs to the lyase 1 family. Argininosuccinate lyase subfamily.</text>
</comment>
<evidence type="ECO:0000255" key="1">
    <source>
        <dbReference type="HAMAP-Rule" id="MF_00006"/>
    </source>
</evidence>
<protein>
    <recommendedName>
        <fullName evidence="1">Argininosuccinate lyase</fullName>
        <shortName evidence="1">ASAL</shortName>
        <ecNumber evidence="1">4.3.2.1</ecNumber>
    </recommendedName>
    <alternativeName>
        <fullName evidence="1">Arginosuccinase</fullName>
    </alternativeName>
</protein>
<organism>
    <name type="scientific">Bradyrhizobium sp. (strain ORS 278)</name>
    <dbReference type="NCBI Taxonomy" id="114615"/>
    <lineage>
        <taxon>Bacteria</taxon>
        <taxon>Pseudomonadati</taxon>
        <taxon>Pseudomonadota</taxon>
        <taxon>Alphaproteobacteria</taxon>
        <taxon>Hyphomicrobiales</taxon>
        <taxon>Nitrobacteraceae</taxon>
        <taxon>Bradyrhizobium</taxon>
    </lineage>
</organism>
<sequence length="463" mass="50215">MSNKMWGGRFTERPDEIMEDINVSIDVDRHLYAQDIAASKAHAAMLAAQGIITSGDAKNMARGLDTILSEITKGSFEFKRALEDIHMNVESRLSELIGPAAGRLHTARSRNDQVATDFRLFVRDEIDDIDAALAAYQQALATRALEFAGTVMPGFTHLQTAQPVTFGHHLLAYVEMAGRDRGRFADARERLNESPLGAAALAGTSFPIDRHATAQALGFDRPMANSLDAVSDRDFVLETLSAASICAVHLSRFAEEIVIWTSPLVGLIKLSDKFTTGSSIMPQKRNPDAAELVRAKTGRVIGALNGLLIVMKGLPLAYQKDMQEDKQGAMEAFAALSLAIRAMTGMALDLVPDEARMKAAAGEGYATATDLADWLVRTLKMPFREAHHVTGRIVALASKQGVALHELPLEAMQEVEPKITADVLGVLSVEASVKSRTSFGGTAPKNVASQAKAWLKRLEKQRK</sequence>
<gene>
    <name evidence="1" type="primary">argH</name>
    <name type="ordered locus">BRADO6487</name>
</gene>
<accession>A4Z1S4</accession>
<name>ARLY_BRASO</name>